<evidence type="ECO:0000255" key="1">
    <source>
        <dbReference type="HAMAP-Rule" id="MF_01288"/>
    </source>
</evidence>
<proteinExistence type="inferred from homology"/>
<gene>
    <name evidence="1" type="primary">rhmD</name>
    <name type="ordered locus">STY2521</name>
    <name type="ordered locus">t0572</name>
</gene>
<keyword id="KW-0456">Lyase</keyword>
<keyword id="KW-0460">Magnesium</keyword>
<keyword id="KW-0479">Metal-binding</keyword>
<comment type="function">
    <text evidence="1">Catalyzes the dehydration of L-rhamnonate to 2-keto-3-deoxy-L-rhamnonate (KDR).</text>
</comment>
<comment type="catalytic activity">
    <reaction evidence="1">
        <text>L-rhamnonate = 2-dehydro-3-deoxy-L-rhamnonate + H2O</text>
        <dbReference type="Rhea" id="RHEA:23080"/>
        <dbReference type="ChEBI" id="CHEBI:15377"/>
        <dbReference type="ChEBI" id="CHEBI:58118"/>
        <dbReference type="ChEBI" id="CHEBI:58371"/>
        <dbReference type="EC" id="4.2.1.90"/>
    </reaction>
</comment>
<comment type="cofactor">
    <cofactor evidence="1">
        <name>Mg(2+)</name>
        <dbReference type="ChEBI" id="CHEBI:18420"/>
    </cofactor>
    <text evidence="1">Binds 1 Mg(2+) ion per subunit.</text>
</comment>
<comment type="subunit">
    <text evidence="1">Homooctamer; tetramer of dimers.</text>
</comment>
<comment type="miscellaneous">
    <text evidence="1">Reaction proceeds via a syn dehydration.</text>
</comment>
<comment type="similarity">
    <text evidence="1">Belongs to the mandelate racemase/muconate lactonizing enzyme family. RhamD subfamily.</text>
</comment>
<protein>
    <recommendedName>
        <fullName evidence="1">L-rhamnonate dehydratase</fullName>
        <shortName evidence="1">RhamD</shortName>
        <ecNumber evidence="1">4.2.1.90</ecNumber>
    </recommendedName>
</protein>
<reference key="1">
    <citation type="journal article" date="2001" name="Nature">
        <title>Complete genome sequence of a multiple drug resistant Salmonella enterica serovar Typhi CT18.</title>
        <authorList>
            <person name="Parkhill J."/>
            <person name="Dougan G."/>
            <person name="James K.D."/>
            <person name="Thomson N.R."/>
            <person name="Pickard D."/>
            <person name="Wain J."/>
            <person name="Churcher C.M."/>
            <person name="Mungall K.L."/>
            <person name="Bentley S.D."/>
            <person name="Holden M.T.G."/>
            <person name="Sebaihia M."/>
            <person name="Baker S."/>
            <person name="Basham D."/>
            <person name="Brooks K."/>
            <person name="Chillingworth T."/>
            <person name="Connerton P."/>
            <person name="Cronin A."/>
            <person name="Davis P."/>
            <person name="Davies R.M."/>
            <person name="Dowd L."/>
            <person name="White N."/>
            <person name="Farrar J."/>
            <person name="Feltwell T."/>
            <person name="Hamlin N."/>
            <person name="Haque A."/>
            <person name="Hien T.T."/>
            <person name="Holroyd S."/>
            <person name="Jagels K."/>
            <person name="Krogh A."/>
            <person name="Larsen T.S."/>
            <person name="Leather S."/>
            <person name="Moule S."/>
            <person name="O'Gaora P."/>
            <person name="Parry C."/>
            <person name="Quail M.A."/>
            <person name="Rutherford K.M."/>
            <person name="Simmonds M."/>
            <person name="Skelton J."/>
            <person name="Stevens K."/>
            <person name="Whitehead S."/>
            <person name="Barrell B.G."/>
        </authorList>
    </citation>
    <scope>NUCLEOTIDE SEQUENCE [LARGE SCALE GENOMIC DNA]</scope>
    <source>
        <strain>CT18</strain>
    </source>
</reference>
<reference key="2">
    <citation type="journal article" date="2003" name="J. Bacteriol.">
        <title>Comparative genomics of Salmonella enterica serovar Typhi strains Ty2 and CT18.</title>
        <authorList>
            <person name="Deng W."/>
            <person name="Liou S.-R."/>
            <person name="Plunkett G. III"/>
            <person name="Mayhew G.F."/>
            <person name="Rose D.J."/>
            <person name="Burland V."/>
            <person name="Kodoyianni V."/>
            <person name="Schwartz D.C."/>
            <person name="Blattner F.R."/>
        </authorList>
    </citation>
    <scope>NUCLEOTIDE SEQUENCE [LARGE SCALE GENOMIC DNA]</scope>
    <source>
        <strain>ATCC 700931 / Ty2</strain>
    </source>
</reference>
<organism>
    <name type="scientific">Salmonella typhi</name>
    <dbReference type="NCBI Taxonomy" id="90370"/>
    <lineage>
        <taxon>Bacteria</taxon>
        <taxon>Pseudomonadati</taxon>
        <taxon>Pseudomonadota</taxon>
        <taxon>Gammaproteobacteria</taxon>
        <taxon>Enterobacterales</taxon>
        <taxon>Enterobacteriaceae</taxon>
        <taxon>Salmonella</taxon>
    </lineage>
</organism>
<name>RHMD_SALTI</name>
<feature type="chain" id="PRO_0000351706" description="L-rhamnonate dehydratase">
    <location>
        <begin position="1"/>
        <end position="405"/>
    </location>
</feature>
<feature type="active site" description="Proton acceptor" evidence="1">
    <location>
        <position position="329"/>
    </location>
</feature>
<feature type="binding site" evidence="1">
    <location>
        <position position="33"/>
    </location>
    <ligand>
        <name>substrate</name>
    </ligand>
</feature>
<feature type="binding site" evidence="1">
    <location>
        <position position="59"/>
    </location>
    <ligand>
        <name>substrate</name>
    </ligand>
</feature>
<feature type="binding site" evidence="1">
    <location>
        <position position="226"/>
    </location>
    <ligand>
        <name>Mg(2+)</name>
        <dbReference type="ChEBI" id="CHEBI:18420"/>
    </ligand>
</feature>
<feature type="binding site" evidence="1">
    <location>
        <position position="252"/>
    </location>
    <ligand>
        <name>Mg(2+)</name>
        <dbReference type="ChEBI" id="CHEBI:18420"/>
    </ligand>
</feature>
<feature type="binding site" evidence="1">
    <location>
        <position position="280"/>
    </location>
    <ligand>
        <name>Mg(2+)</name>
        <dbReference type="ChEBI" id="CHEBI:18420"/>
    </ligand>
</feature>
<feature type="binding site" evidence="1">
    <location>
        <position position="349"/>
    </location>
    <ligand>
        <name>substrate</name>
    </ligand>
</feature>
<feature type="site" description="Increases basicity of active site His" evidence="1">
    <location>
        <position position="302"/>
    </location>
</feature>
<feature type="site" description="Transition state stabilizer" evidence="1">
    <location>
        <position position="349"/>
    </location>
</feature>
<sequence length="405" mass="44607">MENIMTLPKIKHVRAWFIGGATAEKGAGGGDYHDQGGNHWIDDHIATPMSKYRDYEQSRQSFGINVLGTLIVEVEAENGQTGFAVSTAGEMGCFIVEKHLNRFIEGKCVSDIKLIHDQMLGATMYYSGSGGLVMNTISCVDLALWDLFGKVVGLPVYKLLGGAVRDEIQFYATGARPDLAKEMGFIGGKMPTHWGPHDGDAGIRKDAAMVADMREKCGPDFWLMLDCWMSQDVNYATKLAHACAPFNLKWIEECLPPQQYEGYRELKRNAPAGMMVTSGEHHGTLQSFRTLAETGIDIMQPDVGWCGGLTTLVEIAALAKSRGQLVVPHGSSVYSHHAVITFTNTPFSEFLMTSPDCSTLRPQFDPILLDEPVPVNGRIHKSVLDKPGFGVELNRDCHLKRPYSH</sequence>
<accession>Q8Z548</accession>
<accession>Q7CB78</accession>
<dbReference type="EC" id="4.2.1.90" evidence="1"/>
<dbReference type="EMBL" id="AE014613">
    <property type="protein sequence ID" value="AAO68278.1"/>
    <property type="molecule type" value="Genomic_DNA"/>
</dbReference>
<dbReference type="EMBL" id="AL513382">
    <property type="protein sequence ID" value="CAD07524.1"/>
    <property type="molecule type" value="Genomic_DNA"/>
</dbReference>
<dbReference type="RefSeq" id="NP_456834.1">
    <property type="nucleotide sequence ID" value="NC_003198.1"/>
</dbReference>
<dbReference type="SMR" id="Q8Z548"/>
<dbReference type="STRING" id="220341.gene:17586421"/>
<dbReference type="KEGG" id="stt:t0572"/>
<dbReference type="KEGG" id="sty:STY2521"/>
<dbReference type="PATRIC" id="fig|220341.7.peg.2552"/>
<dbReference type="eggNOG" id="COG4948">
    <property type="taxonomic scope" value="Bacteria"/>
</dbReference>
<dbReference type="HOGENOM" id="CLU_030273_1_0_6"/>
<dbReference type="OMA" id="WGYAELR"/>
<dbReference type="Proteomes" id="UP000000541">
    <property type="component" value="Chromosome"/>
</dbReference>
<dbReference type="Proteomes" id="UP000002670">
    <property type="component" value="Chromosome"/>
</dbReference>
<dbReference type="GO" id="GO:0050032">
    <property type="term" value="F:L-rhamnonate dehydratase activity"/>
    <property type="evidence" value="ECO:0007669"/>
    <property type="project" value="UniProtKB-UniRule"/>
</dbReference>
<dbReference type="GO" id="GO:0000287">
    <property type="term" value="F:magnesium ion binding"/>
    <property type="evidence" value="ECO:0007669"/>
    <property type="project" value="UniProtKB-UniRule"/>
</dbReference>
<dbReference type="GO" id="GO:0009063">
    <property type="term" value="P:amino acid catabolic process"/>
    <property type="evidence" value="ECO:0007669"/>
    <property type="project" value="InterPro"/>
</dbReference>
<dbReference type="GO" id="GO:0016052">
    <property type="term" value="P:carbohydrate catabolic process"/>
    <property type="evidence" value="ECO:0007669"/>
    <property type="project" value="TreeGrafter"/>
</dbReference>
<dbReference type="CDD" id="cd03327">
    <property type="entry name" value="MR_like_2"/>
    <property type="match status" value="1"/>
</dbReference>
<dbReference type="FunFam" id="3.30.390.10:FF:000007">
    <property type="entry name" value="L-rhamnonate dehydratase"/>
    <property type="match status" value="1"/>
</dbReference>
<dbReference type="FunFam" id="3.20.20.120:FF:000005">
    <property type="entry name" value="Putative L-rhamnonate dehydratase"/>
    <property type="match status" value="1"/>
</dbReference>
<dbReference type="Gene3D" id="3.20.20.120">
    <property type="entry name" value="Enolase-like C-terminal domain"/>
    <property type="match status" value="1"/>
</dbReference>
<dbReference type="Gene3D" id="3.30.390.10">
    <property type="entry name" value="Enolase-like, N-terminal domain"/>
    <property type="match status" value="1"/>
</dbReference>
<dbReference type="HAMAP" id="MF_01288">
    <property type="entry name" value="Rhamnon_dehydrat"/>
    <property type="match status" value="1"/>
</dbReference>
<dbReference type="InterPro" id="IPR036849">
    <property type="entry name" value="Enolase-like_C_sf"/>
</dbReference>
<dbReference type="InterPro" id="IPR029017">
    <property type="entry name" value="Enolase-like_N"/>
</dbReference>
<dbReference type="InterPro" id="IPR029065">
    <property type="entry name" value="Enolase_C-like"/>
</dbReference>
<dbReference type="InterPro" id="IPR023444">
    <property type="entry name" value="L-Rhamnon_dehydrat"/>
</dbReference>
<dbReference type="InterPro" id="IPR018110">
    <property type="entry name" value="Mandel_Rmase/mucon_lact_enz_CS"/>
</dbReference>
<dbReference type="InterPro" id="IPR013342">
    <property type="entry name" value="Mandelate_racemase_C"/>
</dbReference>
<dbReference type="InterPro" id="IPR013341">
    <property type="entry name" value="Mandelate_racemase_N_dom"/>
</dbReference>
<dbReference type="InterPro" id="IPR046945">
    <property type="entry name" value="RHMD-like"/>
</dbReference>
<dbReference type="NCBIfam" id="NF011968">
    <property type="entry name" value="PRK15440.1"/>
    <property type="match status" value="1"/>
</dbReference>
<dbReference type="PANTHER" id="PTHR13794">
    <property type="entry name" value="ENOLASE SUPERFAMILY, MANDELATE RACEMASE"/>
    <property type="match status" value="1"/>
</dbReference>
<dbReference type="PANTHER" id="PTHR13794:SF58">
    <property type="entry name" value="MITOCHONDRIAL ENOLASE SUPERFAMILY MEMBER 1"/>
    <property type="match status" value="1"/>
</dbReference>
<dbReference type="Pfam" id="PF13378">
    <property type="entry name" value="MR_MLE_C"/>
    <property type="match status" value="1"/>
</dbReference>
<dbReference type="Pfam" id="PF02746">
    <property type="entry name" value="MR_MLE_N"/>
    <property type="match status" value="1"/>
</dbReference>
<dbReference type="SFLD" id="SFLDS00001">
    <property type="entry name" value="Enolase"/>
    <property type="match status" value="1"/>
</dbReference>
<dbReference type="SFLD" id="SFLDF00006">
    <property type="entry name" value="rhamnonate_dehydratase"/>
    <property type="match status" value="1"/>
</dbReference>
<dbReference type="SMART" id="SM00922">
    <property type="entry name" value="MR_MLE"/>
    <property type="match status" value="1"/>
</dbReference>
<dbReference type="SUPFAM" id="SSF51604">
    <property type="entry name" value="Enolase C-terminal domain-like"/>
    <property type="match status" value="1"/>
</dbReference>
<dbReference type="SUPFAM" id="SSF54826">
    <property type="entry name" value="Enolase N-terminal domain-like"/>
    <property type="match status" value="1"/>
</dbReference>
<dbReference type="PROSITE" id="PS00908">
    <property type="entry name" value="MR_MLE_1"/>
    <property type="match status" value="1"/>
</dbReference>